<gene>
    <name evidence="10" type="primary">PKSA</name>
    <name evidence="17" type="synonym">LAP6</name>
    <name evidence="15" type="ordered locus">At1g02050</name>
    <name evidence="16" type="ORF">T7I23.4</name>
</gene>
<feature type="chain" id="PRO_0000432840" description="Type III polyketide synthase A">
    <location>
        <begin position="1"/>
        <end position="395"/>
    </location>
</feature>
<feature type="active site" description="Nucleophile" evidence="3 5">
    <location>
        <position position="172"/>
    </location>
</feature>
<feature type="binding site" evidence="1">
    <location>
        <begin position="63"/>
        <end position="70"/>
    </location>
    <ligand>
        <name>CoA</name>
        <dbReference type="ChEBI" id="CHEBI:57287"/>
    </ligand>
</feature>
<feature type="binding site" evidence="1">
    <location>
        <begin position="224"/>
        <end position="225"/>
    </location>
    <ligand>
        <name>substrate</name>
    </ligand>
</feature>
<feature type="binding site" evidence="2">
    <location>
        <position position="274"/>
    </location>
    <ligand>
        <name>CoA</name>
        <dbReference type="ChEBI" id="CHEBI:57287"/>
    </ligand>
</feature>
<feature type="binding site" evidence="2">
    <location>
        <begin position="314"/>
        <end position="317"/>
    </location>
    <ligand>
        <name>CoA</name>
        <dbReference type="ChEBI" id="CHEBI:57287"/>
    </ligand>
</feature>
<feature type="binding site" evidence="1">
    <location>
        <position position="317"/>
    </location>
    <ligand>
        <name>CoA</name>
        <dbReference type="ChEBI" id="CHEBI:57287"/>
    </ligand>
</feature>
<feature type="mutagenesis site" description="In lap6-1; pollen exine layer defects leading to altered pollen-stigma adhesion." evidence="7">
    <original>I</original>
    <variation>T</variation>
    <location>
        <position position="132"/>
    </location>
</feature>
<organism evidence="18">
    <name type="scientific">Arabidopsis thaliana</name>
    <name type="common">Mouse-ear cress</name>
    <dbReference type="NCBI Taxonomy" id="3702"/>
    <lineage>
        <taxon>Eukaryota</taxon>
        <taxon>Viridiplantae</taxon>
        <taxon>Streptophyta</taxon>
        <taxon>Embryophyta</taxon>
        <taxon>Tracheophyta</taxon>
        <taxon>Spermatophyta</taxon>
        <taxon>Magnoliopsida</taxon>
        <taxon>eudicotyledons</taxon>
        <taxon>Gunneridae</taxon>
        <taxon>Pentapetalae</taxon>
        <taxon>rosids</taxon>
        <taxon>malvids</taxon>
        <taxon>Brassicales</taxon>
        <taxon>Brassicaceae</taxon>
        <taxon>Camelineae</taxon>
        <taxon>Arabidopsis</taxon>
    </lineage>
</organism>
<evidence type="ECO:0000250" key="1">
    <source>
        <dbReference type="UniProtKB" id="P30074"/>
    </source>
</evidence>
<evidence type="ECO:0000250" key="2">
    <source>
        <dbReference type="UniProtKB" id="Q58VP7"/>
    </source>
</evidence>
<evidence type="ECO:0000250" key="3">
    <source>
        <dbReference type="UniProtKB" id="Q94FV7"/>
    </source>
</evidence>
<evidence type="ECO:0000250" key="4">
    <source>
        <dbReference type="UniProtKB" id="Q9LKP7"/>
    </source>
</evidence>
<evidence type="ECO:0000255" key="5">
    <source>
        <dbReference type="PROSITE-ProRule" id="PRU10023"/>
    </source>
</evidence>
<evidence type="ECO:0000269" key="6">
    <source>
    </source>
</evidence>
<evidence type="ECO:0000269" key="7">
    <source>
    </source>
</evidence>
<evidence type="ECO:0000269" key="8">
    <source>
    </source>
</evidence>
<evidence type="ECO:0000269" key="9">
    <source>
    </source>
</evidence>
<evidence type="ECO:0000303" key="10">
    <source>
    </source>
</evidence>
<evidence type="ECO:0000303" key="11">
    <source>
    </source>
</evidence>
<evidence type="ECO:0000303" key="12">
    <source>
    </source>
</evidence>
<evidence type="ECO:0000305" key="13"/>
<evidence type="ECO:0000305" key="14">
    <source>
    </source>
</evidence>
<evidence type="ECO:0000312" key="15">
    <source>
        <dbReference type="Araport" id="AT1G02050"/>
    </source>
</evidence>
<evidence type="ECO:0000312" key="16">
    <source>
        <dbReference type="EMBL" id="AAC24368.1"/>
    </source>
</evidence>
<evidence type="ECO:0000312" key="17">
    <source>
        <dbReference type="EMBL" id="AEE27371.1"/>
    </source>
</evidence>
<evidence type="ECO:0000312" key="18">
    <source>
        <dbReference type="Proteomes" id="UP000006548"/>
    </source>
</evidence>
<name>PKSA_ARATH</name>
<dbReference type="EC" id="2.3.1.-" evidence="14"/>
<dbReference type="EMBL" id="U89959">
    <property type="protein sequence ID" value="AAC24368.1"/>
    <property type="molecule type" value="Genomic_DNA"/>
</dbReference>
<dbReference type="EMBL" id="CP002684">
    <property type="protein sequence ID" value="AEE27371.1"/>
    <property type="molecule type" value="Genomic_DNA"/>
</dbReference>
<dbReference type="EMBL" id="BT030313">
    <property type="protein sequence ID" value="ABO09877.1"/>
    <property type="molecule type" value="mRNA"/>
</dbReference>
<dbReference type="EMBL" id="DQ062309">
    <property type="protein sequence ID" value="AAY96717.1"/>
    <property type="molecule type" value="Genomic_DNA"/>
</dbReference>
<dbReference type="EMBL" id="DQ062310">
    <property type="protein sequence ID" value="AAY96718.1"/>
    <property type="molecule type" value="Genomic_DNA"/>
</dbReference>
<dbReference type="EMBL" id="DQ062318">
    <property type="protein sequence ID" value="AAY96726.1"/>
    <property type="molecule type" value="Genomic_DNA"/>
</dbReference>
<dbReference type="EMBL" id="DQ062322">
    <property type="protein sequence ID" value="AAY96730.1"/>
    <property type="molecule type" value="Genomic_DNA"/>
</dbReference>
<dbReference type="EMBL" id="DQ062323">
    <property type="protein sequence ID" value="AAY96731.1"/>
    <property type="molecule type" value="Genomic_DNA"/>
</dbReference>
<dbReference type="EMBL" id="DQ062324">
    <property type="protein sequence ID" value="AAY96732.1"/>
    <property type="molecule type" value="Genomic_DNA"/>
</dbReference>
<dbReference type="EMBL" id="DQ062327">
    <property type="protein sequence ID" value="AAY96735.1"/>
    <property type="molecule type" value="Genomic_DNA"/>
</dbReference>
<dbReference type="EMBL" id="DQ062328">
    <property type="protein sequence ID" value="AAY96736.1"/>
    <property type="molecule type" value="Genomic_DNA"/>
</dbReference>
<dbReference type="EMBL" id="DQ062331">
    <property type="protein sequence ID" value="AAY96739.1"/>
    <property type="molecule type" value="Genomic_DNA"/>
</dbReference>
<dbReference type="EMBL" id="DQ062336">
    <property type="protein sequence ID" value="AAY96744.1"/>
    <property type="molecule type" value="Genomic_DNA"/>
</dbReference>
<dbReference type="EMBL" id="DQ062339">
    <property type="protein sequence ID" value="AAY96747.1"/>
    <property type="molecule type" value="Genomic_DNA"/>
</dbReference>
<dbReference type="PIR" id="E86152">
    <property type="entry name" value="E86152"/>
</dbReference>
<dbReference type="RefSeq" id="NP_171707.1">
    <property type="nucleotide sequence ID" value="NM_100085.4"/>
</dbReference>
<dbReference type="SMR" id="O23674"/>
<dbReference type="FunCoup" id="O23674">
    <property type="interactions" value="19"/>
</dbReference>
<dbReference type="IntAct" id="O23674">
    <property type="interactions" value="3"/>
</dbReference>
<dbReference type="STRING" id="3702.O23674"/>
<dbReference type="PaxDb" id="3702-AT1G02050.1"/>
<dbReference type="EnsemblPlants" id="AT1G02050.1">
    <property type="protein sequence ID" value="AT1G02050.1"/>
    <property type="gene ID" value="AT1G02050"/>
</dbReference>
<dbReference type="GeneID" id="839280"/>
<dbReference type="Gramene" id="AT1G02050.1">
    <property type="protein sequence ID" value="AT1G02050.1"/>
    <property type="gene ID" value="AT1G02050"/>
</dbReference>
<dbReference type="KEGG" id="ath:AT1G02050"/>
<dbReference type="Araport" id="AT1G02050"/>
<dbReference type="TAIR" id="AT1G02050">
    <property type="gene designation" value="LAP6"/>
</dbReference>
<dbReference type="eggNOG" id="ENOG502QSSY">
    <property type="taxonomic scope" value="Eukaryota"/>
</dbReference>
<dbReference type="HOGENOM" id="CLU_034992_2_0_1"/>
<dbReference type="InParanoid" id="O23674"/>
<dbReference type="OMA" id="GQESPFM"/>
<dbReference type="PhylomeDB" id="O23674"/>
<dbReference type="BioCyc" id="ARA:AT1G02050-MONOMER"/>
<dbReference type="BioCyc" id="MetaCyc:AT1G02050-MONOMER"/>
<dbReference type="UniPathway" id="UPA00154"/>
<dbReference type="PRO" id="PR:O23674"/>
<dbReference type="Proteomes" id="UP000006548">
    <property type="component" value="Chromosome 1"/>
</dbReference>
<dbReference type="ExpressionAtlas" id="O23674">
    <property type="expression patterns" value="baseline and differential"/>
</dbReference>
<dbReference type="GO" id="GO:0005783">
    <property type="term" value="C:endoplasmic reticulum"/>
    <property type="evidence" value="ECO:0000314"/>
    <property type="project" value="UniProtKB"/>
</dbReference>
<dbReference type="GO" id="GO:0090439">
    <property type="term" value="F:tetraketide alpha-pyrone synthase activity"/>
    <property type="evidence" value="ECO:0000314"/>
    <property type="project" value="TAIR"/>
</dbReference>
<dbReference type="GO" id="GO:0009813">
    <property type="term" value="P:flavonoid biosynthetic process"/>
    <property type="evidence" value="ECO:0007669"/>
    <property type="project" value="UniProtKB-UniPathway"/>
</dbReference>
<dbReference type="GO" id="GO:0010584">
    <property type="term" value="P:pollen exine formation"/>
    <property type="evidence" value="ECO:0000315"/>
    <property type="project" value="TAIR"/>
</dbReference>
<dbReference type="GO" id="GO:0030639">
    <property type="term" value="P:polyketide biosynthetic process"/>
    <property type="evidence" value="ECO:0000314"/>
    <property type="project" value="TAIR"/>
</dbReference>
<dbReference type="GO" id="GO:0080110">
    <property type="term" value="P:sporopollenin biosynthetic process"/>
    <property type="evidence" value="ECO:0000315"/>
    <property type="project" value="TAIR"/>
</dbReference>
<dbReference type="CDD" id="cd00831">
    <property type="entry name" value="CHS_like"/>
    <property type="match status" value="1"/>
</dbReference>
<dbReference type="FunFam" id="3.40.47.10:FF:000014">
    <property type="entry name" value="Chalcone synthase 1"/>
    <property type="match status" value="1"/>
</dbReference>
<dbReference type="FunFam" id="3.40.47.10:FF:000025">
    <property type="entry name" value="Chalcone synthase 2"/>
    <property type="match status" value="1"/>
</dbReference>
<dbReference type="Gene3D" id="3.40.47.10">
    <property type="match status" value="2"/>
</dbReference>
<dbReference type="InterPro" id="IPR012328">
    <property type="entry name" value="Chalcone/stilbene_synt_C"/>
</dbReference>
<dbReference type="InterPro" id="IPR001099">
    <property type="entry name" value="Chalcone/stilbene_synt_N"/>
</dbReference>
<dbReference type="InterPro" id="IPR011141">
    <property type="entry name" value="Polyketide_synthase_type-III"/>
</dbReference>
<dbReference type="InterPro" id="IPR016039">
    <property type="entry name" value="Thiolase-like"/>
</dbReference>
<dbReference type="PANTHER" id="PTHR11877">
    <property type="entry name" value="HYDROXYMETHYLGLUTARYL-COA SYNTHASE"/>
    <property type="match status" value="1"/>
</dbReference>
<dbReference type="PANTHER" id="PTHR11877:SF46">
    <property type="entry name" value="TYPE III POLYKETIDE SYNTHASE A"/>
    <property type="match status" value="1"/>
</dbReference>
<dbReference type="Pfam" id="PF02797">
    <property type="entry name" value="Chal_sti_synt_C"/>
    <property type="match status" value="1"/>
</dbReference>
<dbReference type="Pfam" id="PF00195">
    <property type="entry name" value="Chal_sti_synt_N"/>
    <property type="match status" value="1"/>
</dbReference>
<dbReference type="PIRSF" id="PIRSF000451">
    <property type="entry name" value="PKS_III"/>
    <property type="match status" value="1"/>
</dbReference>
<dbReference type="SUPFAM" id="SSF53901">
    <property type="entry name" value="Thiolase-like"/>
    <property type="match status" value="2"/>
</dbReference>
<proteinExistence type="evidence at protein level"/>
<sequence>MSNSRMNGVEKLSSKSTRRVANAGKATLLALGKAFPSQVVPQENLVEGFLRDTKCDDAFIKEKLEHLCKTTTVKTRYTVLTREILAKYPELTTEGSPTIKQRLEIANEAVVEMALEASLGCIKEWGRPVEDITHIVYVSSSEIRLPGGDLYLSAKLGLRNDVNRVMLYFLGCYGGVTGLRVAKDIAENNPGSRVLLTTSETTILGFRPPNKARPYDLVGAALFGDGAAAVIIGADPRECEAPFMELHYAVQQFLPGTQNVIEGRLTEEGINFKLGRDLPQKIEENIEEFCKKLMGKAGDESMEFNDMFWAVHPGGPAILNRLETKLKLEKEKLESSRRALVDYGNVSSNTILYVMEYMRDELKKKGDAAQEWGLGLAFGPGITFEGLLIRSLTSS</sequence>
<comment type="function">
    <text evidence="6 7 8">Plant type III polyketide synthases (PKSs) that catalyzes the condensation of malonyl-CoA units with various CoA ester starter molecules to generate a diverse array of natural products including long-chain alkyl alpha-pyrones. Accepts up to C(20) chain-length fatty acyl CoAs as starter substrates, and carries out sequential condensations with malonyl-CoA to produce triketide and tetraketide alpha-pyrones, potential sporopollenin precursors (PubMed:19043200, PubMed:21193570). Favorite substrates for are midchain- and v-hydroxylated fatty acyl-CoAs (e.g. 12-hydroxyoctadecanoyl-CoA and 16-hydroxyhexadecanoyl-CoA). Required for pollen development and sporopollenin biosynthesis, the major constituent of exine in the outer pollen wall (PubMed:20442277, PubMed:21193570). In vitro, can use 4-coumaroyl-coenzyme A as substrate to produce bis-noryangonin and fatty acyl-coenzyme A as substrate to produce medium-chain alkyl pyrones. May play a role in both the synthesis of pollen fatty acids and phenolics found in exine (PubMed:20442277).</text>
</comment>
<comment type="biophysicochemical properties">
    <kinetics>
        <KM evidence="6">22.9 uM for n-dodecanoyl-CoA (at pH 7 and 30 degrees Celsius)</KM>
        <KM evidence="8">25 uM for 16-OH-C16-CoA</KM>
        <KM evidence="8">23 uM for 12-OH-C18-CoA</KM>
        <KM evidence="8">48 uM for C16-CoA</KM>
        <text evidence="6 8">kcat is 0.11 min(-1) with n-dodecanoyl-CoA as substrate for the production of the triketide alpha-pyrone (at pH 7 and 30 degrees Celsius) (PubMed:19043200). kcat is 2.8 msec(-1) with 16-OH-C16-CoA as substrate, 5 msec(-1) with 12-OH-C18-CoA as substrate and 0.13 msec(-1) with C16-CoA as substrate (PubMed:21193570).</text>
    </kinetics>
    <phDependence>
        <text evidence="6">Optimum pH is 7 (at 30 degrees Celsius).</text>
    </phDependence>
</comment>
<comment type="pathway">
    <text evidence="4">Secondary metabolite biosynthesis; flavonoid biosynthesis.</text>
</comment>
<comment type="subunit">
    <text evidence="1 9">Homodimer (By similarity). Interacts with 4CLL1/ACOS5 and TKPR1 (PubMed:23632852).</text>
</comment>
<comment type="interaction">
    <interactant intactId="EBI-30859485">
        <id>O23674</id>
    </interactant>
    <interactant intactId="EBI-30859465">
        <id>Q9LQ12</id>
        <label>4CLL1</label>
    </interactant>
    <organismsDiffer>false</organismsDiffer>
    <experiments>3</experiments>
</comment>
<comment type="interaction">
    <interactant intactId="EBI-30859485">
        <id>O23674</id>
    </interactant>
    <interactant intactId="EBI-4432350">
        <id>Q500U8</id>
        <label>TKPR1</label>
    </interactant>
    <organismsDiffer>false</organismsDiffer>
    <experiments>2</experiments>
</comment>
<comment type="subcellular location">
    <subcellularLocation>
        <location evidence="8 9">Endoplasmic reticulum</location>
    </subcellularLocation>
</comment>
<comment type="tissue specificity">
    <text evidence="7 8 9">Expressed in flowers and flower buds (at protein level), and, at very low levels, in roots, seedlings, leaves and stems (PubMed:20442277, PubMed:21193570). Mostly confined to anther tapetal cells (PubMed:23632852).</text>
</comment>
<comment type="developmental stage">
    <text evidence="7 8">Most abundant in the youngest flower buds, but levels decline as flowers mature. Specifically and transiently expressed in tapetal cells during microspore development in anthers (at protein level).</text>
</comment>
<comment type="disruption phenotype">
    <text evidence="7 8">Pollen exine layer defects. Reduced accumulation of flavonoid precursors and flavonoids in developing anthers. Plants lacking both PKS-A and PKS-B are completely male sterile, with no apparent exine, thus leading to pollen grain collapse under vacuum. Altered pollen-stigma adhesion.</text>
</comment>
<comment type="similarity">
    <text evidence="13">Belongs to the thiolase-like superfamily. Chalcone/stilbene synthases family.</text>
</comment>
<keyword id="KW-0012">Acyltransferase</keyword>
<keyword id="KW-0217">Developmental protein</keyword>
<keyword id="KW-0256">Endoplasmic reticulum</keyword>
<keyword id="KW-0284">Flavonoid biosynthesis</keyword>
<keyword id="KW-1185">Reference proteome</keyword>
<keyword id="KW-0808">Transferase</keyword>
<reference key="1">
    <citation type="journal article" date="2000" name="Nature">
        <title>Sequence and analysis of chromosome 1 of the plant Arabidopsis thaliana.</title>
        <authorList>
            <person name="Theologis A."/>
            <person name="Ecker J.R."/>
            <person name="Palm C.J."/>
            <person name="Federspiel N.A."/>
            <person name="Kaul S."/>
            <person name="White O."/>
            <person name="Alonso J."/>
            <person name="Altafi H."/>
            <person name="Araujo R."/>
            <person name="Bowman C.L."/>
            <person name="Brooks S.Y."/>
            <person name="Buehler E."/>
            <person name="Chan A."/>
            <person name="Chao Q."/>
            <person name="Chen H."/>
            <person name="Cheuk R.F."/>
            <person name="Chin C.W."/>
            <person name="Chung M.K."/>
            <person name="Conn L."/>
            <person name="Conway A.B."/>
            <person name="Conway A.R."/>
            <person name="Creasy T.H."/>
            <person name="Dewar K."/>
            <person name="Dunn P."/>
            <person name="Etgu P."/>
            <person name="Feldblyum T.V."/>
            <person name="Feng J.-D."/>
            <person name="Fong B."/>
            <person name="Fujii C.Y."/>
            <person name="Gill J.E."/>
            <person name="Goldsmith A.D."/>
            <person name="Haas B."/>
            <person name="Hansen N.F."/>
            <person name="Hughes B."/>
            <person name="Huizar L."/>
            <person name="Hunter J.L."/>
            <person name="Jenkins J."/>
            <person name="Johnson-Hopson C."/>
            <person name="Khan S."/>
            <person name="Khaykin E."/>
            <person name="Kim C.J."/>
            <person name="Koo H.L."/>
            <person name="Kremenetskaia I."/>
            <person name="Kurtz D.B."/>
            <person name="Kwan A."/>
            <person name="Lam B."/>
            <person name="Langin-Hooper S."/>
            <person name="Lee A."/>
            <person name="Lee J.M."/>
            <person name="Lenz C.A."/>
            <person name="Li J.H."/>
            <person name="Li Y.-P."/>
            <person name="Lin X."/>
            <person name="Liu S.X."/>
            <person name="Liu Z.A."/>
            <person name="Luros J.S."/>
            <person name="Maiti R."/>
            <person name="Marziali A."/>
            <person name="Militscher J."/>
            <person name="Miranda M."/>
            <person name="Nguyen M."/>
            <person name="Nierman W.C."/>
            <person name="Osborne B.I."/>
            <person name="Pai G."/>
            <person name="Peterson J."/>
            <person name="Pham P.K."/>
            <person name="Rizzo M."/>
            <person name="Rooney T."/>
            <person name="Rowley D."/>
            <person name="Sakano H."/>
            <person name="Salzberg S.L."/>
            <person name="Schwartz J.R."/>
            <person name="Shinn P."/>
            <person name="Southwick A.M."/>
            <person name="Sun H."/>
            <person name="Tallon L.J."/>
            <person name="Tambunga G."/>
            <person name="Toriumi M.J."/>
            <person name="Town C.D."/>
            <person name="Utterback T."/>
            <person name="Van Aken S."/>
            <person name="Vaysberg M."/>
            <person name="Vysotskaia V.S."/>
            <person name="Walker M."/>
            <person name="Wu D."/>
            <person name="Yu G."/>
            <person name="Fraser C.M."/>
            <person name="Venter J.C."/>
            <person name="Davis R.W."/>
        </authorList>
    </citation>
    <scope>NUCLEOTIDE SEQUENCE [LARGE SCALE GENOMIC DNA]</scope>
    <source>
        <strain>cv. Columbia</strain>
    </source>
</reference>
<reference key="2">
    <citation type="journal article" date="2017" name="Plant J.">
        <title>Araport11: a complete reannotation of the Arabidopsis thaliana reference genome.</title>
        <authorList>
            <person name="Cheng C.Y."/>
            <person name="Krishnakumar V."/>
            <person name="Chan A.P."/>
            <person name="Thibaud-Nissen F."/>
            <person name="Schobel S."/>
            <person name="Town C.D."/>
        </authorList>
    </citation>
    <scope>GENOME REANNOTATION</scope>
    <source>
        <strain>cv. Columbia</strain>
    </source>
</reference>
<reference key="3">
    <citation type="submission" date="2007-02" db="EMBL/GenBank/DDBJ databases">
        <title>Arabidopsis ORF clones.</title>
        <authorList>
            <person name="Bautista V.R."/>
            <person name="Kim C.J."/>
            <person name="Chen H."/>
            <person name="Wu S.Y."/>
            <person name="De Los Reyes C."/>
            <person name="Ecker J.R."/>
        </authorList>
    </citation>
    <scope>NUCLEOTIDE SEQUENCE [LARGE SCALE MRNA]</scope>
    <source>
        <strain>cv. Columbia</strain>
    </source>
</reference>
<reference key="4">
    <citation type="journal article" date="2007" name="Mol. Phylogenet. Evol.">
        <title>Diverse selective modes among orthologs/paralogs of the chalcone synthase (Chs) gene family of Arabidopsis thaliana and its relative A. halleri ssp. gemmifera.</title>
        <authorList>
            <person name="Wang W.-K."/>
            <person name="Schaal B.A."/>
            <person name="Chiou Y.-M."/>
            <person name="Murakami N."/>
            <person name="Ge X.-J."/>
            <person name="Huang C.-C."/>
            <person name="Chiang T.-Y."/>
        </authorList>
    </citation>
    <scope>NUCLEOTIDE SEQUENCE [GENOMIC DNA] OF 1-392</scope>
    <source>
        <strain>cv. Ag-0</strain>
        <strain>cv. Ba-1</strain>
        <strain>cv. En-T</strain>
        <strain>cv. Gr-1</strain>
        <strain>cv. Gre-0</strain>
        <strain>cv. Lip-0</strain>
        <strain>cv. Litva</strain>
        <strain>cv. Mv-0</strain>
        <strain>cv. Oy-0</strain>
        <strain>cv. Rs-1</strain>
        <strain>cv. St-0</strain>
    </source>
</reference>
<reference key="5">
    <citation type="journal article" date="2008" name="Biol. Pharm. Bull.">
        <title>Structure function analysis of novel type III polyketide synthases from Arabidopsis thaliana.</title>
        <authorList>
            <person name="Mizuuchi Y."/>
            <person name="Shimokawa Y."/>
            <person name="Wanibuchi K."/>
            <person name="Noguchi H."/>
            <person name="Abe I."/>
        </authorList>
    </citation>
    <scope>FUNCTION</scope>
    <scope>NOMENCLATURE</scope>
    <scope>BIOPHYSICOCHEMICAL PROPERTIES</scope>
</reference>
<reference key="6">
    <citation type="journal article" date="2010" name="Plant Cell">
        <title>LAP6/POLYKETIDE SYNTHASE A and LAP5/POLYKETIDE SYNTHASE B encode hydroxyalkyl alpha-pyrone synthases required for pollen development and sporopollenin biosynthesis in Arabidopsis thaliana.</title>
        <authorList>
            <person name="Kim S.S."/>
            <person name="Grienenberger E."/>
            <person name="Lallemand B."/>
            <person name="Colpitts C.C."/>
            <person name="Kim S.Y."/>
            <person name="de Azevedo Souza C."/>
            <person name="Geoffroy P."/>
            <person name="Heintz D."/>
            <person name="Krahn D."/>
            <person name="Kaiser M."/>
            <person name="Kombrink E."/>
            <person name="Heitz T."/>
            <person name="Suh D.-Y."/>
            <person name="Legrand M."/>
            <person name="Douglas C.J."/>
        </authorList>
    </citation>
    <scope>FUNCTION</scope>
    <scope>DISRUPTION PHENOTYPE</scope>
    <scope>DEVELOPMENTAL STAGE</scope>
    <scope>TISSUE SPECIFICITY</scope>
    <scope>BIOPHYSICOCHEMICAL PROPERTIES</scope>
    <scope>SUBCELLULAR LOCATION</scope>
    <source>
        <strain>cv. Columbia</strain>
    </source>
</reference>
<reference key="7">
    <citation type="journal article" date="2010" name="Plant Physiol.">
        <title>LAP5 and LAP6 encode anther-specific proteins with similarity to chalcone synthase essential for pollen exine development in Arabidopsis.</title>
        <authorList>
            <person name="Dobritsa A.A."/>
            <person name="Lei Z."/>
            <person name="Nishikawa S."/>
            <person name="Urbanczyk-Wochniak E."/>
            <person name="Huhman D.V."/>
            <person name="Preuss D."/>
            <person name="Sumner L.W."/>
        </authorList>
    </citation>
    <scope>FUNCTION</scope>
    <scope>DISRUPTION PHENOTYPE</scope>
    <scope>MUTAGENESIS OF ILE-132</scope>
    <scope>TISSUE SPECIFICITY</scope>
    <scope>DEVELOPMENTAL STAGE</scope>
    <scope>GENE FAMILY</scope>
    <source>
        <strain>cv. Landsberg erecta</strain>
    </source>
</reference>
<reference key="8">
    <citation type="journal article" date="2013" name="Plant Physiol.">
        <title>Sporopollenin biosynthetic enzymes interact and constitute a metabolon localized to the endoplasmic reticulum of tapetum cells.</title>
        <authorList>
            <person name="Lallemand B."/>
            <person name="Erhardt M."/>
            <person name="Heitz T."/>
            <person name="Legrand M."/>
        </authorList>
    </citation>
    <scope>SUBCELLULAR LOCATION</scope>
    <scope>TISSUE SPECIFICITY</scope>
    <scope>INTERACTION WITH 4CLL1/ACOS5 AND TKPR1</scope>
</reference>
<protein>
    <recommendedName>
        <fullName evidence="10">Type III polyketide synthase A</fullName>
        <shortName>PKS-A</shortName>
        <ecNumber evidence="14">2.3.1.-</ecNumber>
    </recommendedName>
    <alternativeName>
        <fullName evidence="12">Hydroxyalkyl alpha-pyrone synthase PKS-A</fullName>
    </alternativeName>
    <alternativeName>
        <fullName evidence="11">Protein LESS ADHESIVE POLLEN 6</fullName>
    </alternativeName>
</protein>
<accession>O23674</accession>
<accession>Q4JNW9</accession>